<reference key="1">
    <citation type="journal article" date="1989" name="J. Bacteriol.">
        <title>Identification and sequence of rfbS and rfbE, which determine antigenic specificity of group A and group D salmonellae.</title>
        <authorList>
            <person name="Verma N."/>
            <person name="Reeves P.R."/>
        </authorList>
    </citation>
    <scope>NUCLEOTIDE SEQUENCE [GENOMIC DNA]</scope>
    <source>
        <strain>ATCC 700931 / Ty2</strain>
    </source>
</reference>
<reference key="2">
    <citation type="journal article" date="2001" name="Nature">
        <title>Complete genome sequence of a multiple drug resistant Salmonella enterica serovar Typhi CT18.</title>
        <authorList>
            <person name="Parkhill J."/>
            <person name="Dougan G."/>
            <person name="James K.D."/>
            <person name="Thomson N.R."/>
            <person name="Pickard D."/>
            <person name="Wain J."/>
            <person name="Churcher C.M."/>
            <person name="Mungall K.L."/>
            <person name="Bentley S.D."/>
            <person name="Holden M.T.G."/>
            <person name="Sebaihia M."/>
            <person name="Baker S."/>
            <person name="Basham D."/>
            <person name="Brooks K."/>
            <person name="Chillingworth T."/>
            <person name="Connerton P."/>
            <person name="Cronin A."/>
            <person name="Davis P."/>
            <person name="Davies R.M."/>
            <person name="Dowd L."/>
            <person name="White N."/>
            <person name="Farrar J."/>
            <person name="Feltwell T."/>
            <person name="Hamlin N."/>
            <person name="Haque A."/>
            <person name="Hien T.T."/>
            <person name="Holroyd S."/>
            <person name="Jagels K."/>
            <person name="Krogh A."/>
            <person name="Larsen T.S."/>
            <person name="Leather S."/>
            <person name="Moule S."/>
            <person name="O'Gaora P."/>
            <person name="Parry C."/>
            <person name="Quail M.A."/>
            <person name="Rutherford K.M."/>
            <person name="Simmonds M."/>
            <person name="Skelton J."/>
            <person name="Stevens K."/>
            <person name="Whitehead S."/>
            <person name="Barrell B.G."/>
        </authorList>
    </citation>
    <scope>NUCLEOTIDE SEQUENCE [LARGE SCALE GENOMIC DNA]</scope>
    <source>
        <strain>CT18</strain>
    </source>
</reference>
<reference key="3">
    <citation type="journal article" date="2003" name="J. Bacteriol.">
        <title>Comparative genomics of Salmonella enterica serovar Typhi strains Ty2 and CT18.</title>
        <authorList>
            <person name="Deng W."/>
            <person name="Liou S.-R."/>
            <person name="Plunkett G. III"/>
            <person name="Mayhew G.F."/>
            <person name="Rose D.J."/>
            <person name="Burland V."/>
            <person name="Kodoyianni V."/>
            <person name="Schwartz D.C."/>
            <person name="Blattner F.R."/>
        </authorList>
    </citation>
    <scope>NUCLEOTIDE SEQUENCE [LARGE SCALE GENOMIC DNA]</scope>
    <source>
        <strain>ATCC 700931 / Ty2</strain>
    </source>
</reference>
<name>RFBS_SALTI</name>
<sequence length="279" mass="31501">MKILIMGAFGFLGSRLTSYFESRHTVIGLARKRNNEATINNIIYTTENNWIEKILEFEPNIIINTIACYGRHNEPATALIESNILMPIRVLESISSLDAVFINCGTSLPPNTSLYAYTKQKANELAAAIIDKVCGKYIELKLEHFYGAFDGDDKFTSMVIRRCLSNQPVKLTSGLQQRDFLYIKDLLTAFDCIISNVNNFPKFHSIEVGSGEAISIREYVDTVKNITKSNSIIEFGVVKERVNELMYSCADIAELEKIGWKREFSLVDALTEIIEEEGK</sequence>
<feature type="chain" id="PRO_0000183265" description="CDP-paratose synthase">
    <location>
        <begin position="1"/>
        <end position="279"/>
    </location>
</feature>
<feature type="active site" description="Proton acceptor" evidence="1">
    <location>
        <position position="115"/>
    </location>
</feature>
<feature type="sequence conflict" description="In Ref. 1; AAB49383." evidence="2" ref="1">
    <original>Q</original>
    <variation>T</variation>
    <location>
        <position position="120"/>
    </location>
</feature>
<organism>
    <name type="scientific">Salmonella typhi</name>
    <dbReference type="NCBI Taxonomy" id="90370"/>
    <lineage>
        <taxon>Bacteria</taxon>
        <taxon>Pseudomonadati</taxon>
        <taxon>Pseudomonadota</taxon>
        <taxon>Gammaproteobacteria</taxon>
        <taxon>Enterobacterales</taxon>
        <taxon>Enterobacteriaceae</taxon>
        <taxon>Salmonella</taxon>
    </lineage>
</organism>
<evidence type="ECO:0000250" key="1"/>
<evidence type="ECO:0000305" key="2"/>
<keyword id="KW-0448">Lipopolysaccharide biosynthesis</keyword>
<keyword id="KW-0521">NADP</keyword>
<keyword id="KW-0560">Oxidoreductase</keyword>
<proteinExistence type="inferred from homology"/>
<gene>
    <name type="primary">rfbS</name>
    <name type="ordered locus">STY2299</name>
    <name type="ordered locus">t0783</name>
</gene>
<dbReference type="EC" id="1.1.1.342"/>
<dbReference type="EMBL" id="M29682">
    <property type="protein sequence ID" value="AAB49383.1"/>
    <property type="molecule type" value="Genomic_DNA"/>
</dbReference>
<dbReference type="EMBL" id="AL513382">
    <property type="protein sequence ID" value="CAD02452.1"/>
    <property type="molecule type" value="Genomic_DNA"/>
</dbReference>
<dbReference type="EMBL" id="AE014613">
    <property type="protein sequence ID" value="AAO68474.1"/>
    <property type="molecule type" value="Genomic_DNA"/>
</dbReference>
<dbReference type="RefSeq" id="NP_456638.1">
    <property type="nucleotide sequence ID" value="NC_003198.1"/>
</dbReference>
<dbReference type="RefSeq" id="WP_000697757.1">
    <property type="nucleotide sequence ID" value="NZ_WSUR01000002.1"/>
</dbReference>
<dbReference type="SMR" id="P14168"/>
<dbReference type="STRING" id="220341.gene:17586207"/>
<dbReference type="KEGG" id="stt:t0783"/>
<dbReference type="KEGG" id="sty:STY2299"/>
<dbReference type="PATRIC" id="fig|220341.7.peg.2319"/>
<dbReference type="eggNOG" id="COG0451">
    <property type="taxonomic scope" value="Bacteria"/>
</dbReference>
<dbReference type="HOGENOM" id="CLU_007383_1_7_6"/>
<dbReference type="OMA" id="FGAIPYR"/>
<dbReference type="OrthoDB" id="9778052at2"/>
<dbReference type="BioCyc" id="MetaCyc:MONOMER-13794"/>
<dbReference type="BRENDA" id="1.1.1.342">
    <property type="organism ID" value="5557"/>
</dbReference>
<dbReference type="UniPathway" id="UPA00055">
    <property type="reaction ID" value="UER00514"/>
</dbReference>
<dbReference type="Proteomes" id="UP000000541">
    <property type="component" value="Chromosome"/>
</dbReference>
<dbReference type="Proteomes" id="UP000002670">
    <property type="component" value="Chromosome"/>
</dbReference>
<dbReference type="GO" id="GO:0016491">
    <property type="term" value="F:oxidoreductase activity"/>
    <property type="evidence" value="ECO:0007669"/>
    <property type="project" value="UniProtKB-KW"/>
</dbReference>
<dbReference type="GO" id="GO:0009103">
    <property type="term" value="P:lipopolysaccharide biosynthetic process"/>
    <property type="evidence" value="ECO:0007669"/>
    <property type="project" value="UniProtKB-KW"/>
</dbReference>
<dbReference type="Gene3D" id="3.40.50.720">
    <property type="entry name" value="NAD(P)-binding Rossmann-like Domain"/>
    <property type="match status" value="2"/>
</dbReference>
<dbReference type="InterPro" id="IPR001509">
    <property type="entry name" value="Epimerase_deHydtase"/>
</dbReference>
<dbReference type="InterPro" id="IPR050177">
    <property type="entry name" value="Lipid_A_modif_metabolic_enz"/>
</dbReference>
<dbReference type="InterPro" id="IPR036291">
    <property type="entry name" value="NAD(P)-bd_dom_sf"/>
</dbReference>
<dbReference type="PANTHER" id="PTHR43245">
    <property type="entry name" value="BIFUNCTIONAL POLYMYXIN RESISTANCE PROTEIN ARNA"/>
    <property type="match status" value="1"/>
</dbReference>
<dbReference type="PANTHER" id="PTHR43245:SF13">
    <property type="entry name" value="UDP-D-APIOSE_UDP-D-XYLOSE SYNTHASE 2"/>
    <property type="match status" value="1"/>
</dbReference>
<dbReference type="Pfam" id="PF01370">
    <property type="entry name" value="Epimerase"/>
    <property type="match status" value="1"/>
</dbReference>
<dbReference type="SUPFAM" id="SSF51735">
    <property type="entry name" value="NAD(P)-binding Rossmann-fold domains"/>
    <property type="match status" value="1"/>
</dbReference>
<comment type="function">
    <text>Catalyzes synthesis of paratose and tyvelose, unusual 3,6-dideoxyhexose sugars that form part of the O-antigen in the lipopolysaccharides of several enteric bacteria.</text>
</comment>
<comment type="catalytic activity">
    <reaction>
        <text>CDP-alpha-D-paratose + NADP(+) = CDP-4-dehydro-3,6-dideoxy-alpha-D-glucose + NADPH + H(+)</text>
        <dbReference type="Rhea" id="RHEA:34567"/>
        <dbReference type="ChEBI" id="CHEBI:15378"/>
        <dbReference type="ChEBI" id="CHEBI:57783"/>
        <dbReference type="ChEBI" id="CHEBI:58349"/>
        <dbReference type="ChEBI" id="CHEBI:70783"/>
        <dbReference type="ChEBI" id="CHEBI:70785"/>
        <dbReference type="EC" id="1.1.1.342"/>
    </reaction>
</comment>
<comment type="pathway">
    <text>Nucleotide-sugar biosynthesis; CDP-3,6-dideoxy-D-mannose biosynthesis; CDP-3,6-dideoxy-D-mannose from CTP and alpha-D-glucose 1-phosphate: step 4/5.</text>
</comment>
<comment type="miscellaneous">
    <text>The functional difference between abequose synthase and paratose synthase lies in the side of the pyranose ring from which the keto group on carbon 4 is attacked in the reduction of CDP-4-keto-3,6-dideoxy-D-glucose.</text>
</comment>
<comment type="similarity">
    <text evidence="2">Belongs to the NAD(P)-dependent epimerase/dehydratase family.</text>
</comment>
<protein>
    <recommendedName>
        <fullName>CDP-paratose synthase</fullName>
        <ecNumber>1.1.1.342</ecNumber>
    </recommendedName>
</protein>
<accession>P14168</accession>